<proteinExistence type="inferred from homology"/>
<sequence>MQEQYRPEDIETQVQLHWQEKQTFKVTEDASKEKYYCLSMLPYPSGRLHMGHVRNYTIGDVISRYQRMLGKNVLQPIGWDAFGLPAEGAAVKNNTAPAPWTYDNIEYMKNQLKLLGFGYDWDREIATCKPDYYRWEQWFFTKLYEKGMVYKKTSAVNWCPHDLTVLANEQVIDGCCWRCDTKVERKEIPQWFIKITDYAEQLLNDLDTLESWPEQVKTMQRNWIGRSEGVDIVFDVVDSEEKLSVYTTRPDTFMGVTYVAVAAGHPLSLQAAATNPALADFVAECRNTKVAEAEMATMEKKGMATGLYAIHPLTGEKLPIWAANFVLMDYGTGAVMAVPGHDARDWEFATKYNLPIKPVILAADGSEPDLSQEAMTEKGTLFNSGEFDGLNHEDGFNAIADKLVALGVGQRKVNYRLRDWGVSRQRYWGAPIPMVTLEDGTVVPTPEDQLPVILPEDVVMDGISSPIKADPEWAKTTVNGIPGLRETDTFDTFMESSWYYARYTCPQYDDGMLDPAAANYWLPVDQYVGGIEHAIMHLMYFRFFHKLLRDAGLVDSDEPAKRLLCQGMVLADAFYYTGNNGERIWVSPVDAIVERDDKGRIVKAVDAEGHELVYAGMSKMSKSKNNGIDPQVMVEKYGADTVRLFMMFASPAEMTLEWQESGVEGANRFLKRVWRLAFDHTAKGAVKPLDIASLTEEQKSLRRDLHKTIAKVTDDVGRRQTFNTAIAAVMELMNKLGRAPQETEQDRALMQEALLAVVRMLYPFTPHVCFSLWQALGGEGDIDTAPWPIADEQAMVEDSKLVVVQVNGKVRGRITVPADATEQQVRERAGQEHLVAKYLDGVTVRKVIYVPGKLLNLVVG</sequence>
<organism>
    <name type="scientific">Yersinia pestis bv. Antiqua (strain Nepal516)</name>
    <dbReference type="NCBI Taxonomy" id="377628"/>
    <lineage>
        <taxon>Bacteria</taxon>
        <taxon>Pseudomonadati</taxon>
        <taxon>Pseudomonadota</taxon>
        <taxon>Gammaproteobacteria</taxon>
        <taxon>Enterobacterales</taxon>
        <taxon>Yersiniaceae</taxon>
        <taxon>Yersinia</taxon>
    </lineage>
</organism>
<gene>
    <name evidence="1" type="primary">leuS</name>
    <name type="ordered locus">YPN_1095</name>
    <name type="ORF">YP516_1189</name>
</gene>
<keyword id="KW-0030">Aminoacyl-tRNA synthetase</keyword>
<keyword id="KW-0067">ATP-binding</keyword>
<keyword id="KW-0963">Cytoplasm</keyword>
<keyword id="KW-0436">Ligase</keyword>
<keyword id="KW-0547">Nucleotide-binding</keyword>
<keyword id="KW-0648">Protein biosynthesis</keyword>
<comment type="catalytic activity">
    <reaction evidence="1">
        <text>tRNA(Leu) + L-leucine + ATP = L-leucyl-tRNA(Leu) + AMP + diphosphate</text>
        <dbReference type="Rhea" id="RHEA:11688"/>
        <dbReference type="Rhea" id="RHEA-COMP:9613"/>
        <dbReference type="Rhea" id="RHEA-COMP:9622"/>
        <dbReference type="ChEBI" id="CHEBI:30616"/>
        <dbReference type="ChEBI" id="CHEBI:33019"/>
        <dbReference type="ChEBI" id="CHEBI:57427"/>
        <dbReference type="ChEBI" id="CHEBI:78442"/>
        <dbReference type="ChEBI" id="CHEBI:78494"/>
        <dbReference type="ChEBI" id="CHEBI:456215"/>
        <dbReference type="EC" id="6.1.1.4"/>
    </reaction>
</comment>
<comment type="subcellular location">
    <subcellularLocation>
        <location evidence="1">Cytoplasm</location>
    </subcellularLocation>
</comment>
<comment type="similarity">
    <text evidence="1">Belongs to the class-I aminoacyl-tRNA synthetase family.</text>
</comment>
<dbReference type="EC" id="6.1.1.4" evidence="1"/>
<dbReference type="EMBL" id="CP000305">
    <property type="protein sequence ID" value="ABG17426.1"/>
    <property type="molecule type" value="Genomic_DNA"/>
</dbReference>
<dbReference type="EMBL" id="ACNQ01000008">
    <property type="protein sequence ID" value="EEO77519.1"/>
    <property type="molecule type" value="Genomic_DNA"/>
</dbReference>
<dbReference type="RefSeq" id="WP_002210333.1">
    <property type="nucleotide sequence ID" value="NZ_ACNQ01000008.1"/>
</dbReference>
<dbReference type="SMR" id="Q1CKQ4"/>
<dbReference type="GeneID" id="57976085"/>
<dbReference type="KEGG" id="ypn:YPN_1095"/>
<dbReference type="HOGENOM" id="CLU_004427_0_0_6"/>
<dbReference type="Proteomes" id="UP000008936">
    <property type="component" value="Chromosome"/>
</dbReference>
<dbReference type="GO" id="GO:0005829">
    <property type="term" value="C:cytosol"/>
    <property type="evidence" value="ECO:0007669"/>
    <property type="project" value="TreeGrafter"/>
</dbReference>
<dbReference type="GO" id="GO:0002161">
    <property type="term" value="F:aminoacyl-tRNA deacylase activity"/>
    <property type="evidence" value="ECO:0007669"/>
    <property type="project" value="InterPro"/>
</dbReference>
<dbReference type="GO" id="GO:0005524">
    <property type="term" value="F:ATP binding"/>
    <property type="evidence" value="ECO:0007669"/>
    <property type="project" value="UniProtKB-UniRule"/>
</dbReference>
<dbReference type="GO" id="GO:0004823">
    <property type="term" value="F:leucine-tRNA ligase activity"/>
    <property type="evidence" value="ECO:0007669"/>
    <property type="project" value="UniProtKB-UniRule"/>
</dbReference>
<dbReference type="GO" id="GO:0006429">
    <property type="term" value="P:leucyl-tRNA aminoacylation"/>
    <property type="evidence" value="ECO:0007669"/>
    <property type="project" value="UniProtKB-UniRule"/>
</dbReference>
<dbReference type="CDD" id="cd07958">
    <property type="entry name" value="Anticodon_Ia_Leu_BEm"/>
    <property type="match status" value="1"/>
</dbReference>
<dbReference type="CDD" id="cd00812">
    <property type="entry name" value="LeuRS_core"/>
    <property type="match status" value="1"/>
</dbReference>
<dbReference type="FunFam" id="1.10.730.10:FF:000002">
    <property type="entry name" value="Leucine--tRNA ligase"/>
    <property type="match status" value="2"/>
</dbReference>
<dbReference type="FunFam" id="2.20.28.290:FF:000001">
    <property type="entry name" value="Leucine--tRNA ligase"/>
    <property type="match status" value="1"/>
</dbReference>
<dbReference type="FunFam" id="3.10.20.590:FF:000001">
    <property type="entry name" value="Leucine--tRNA ligase"/>
    <property type="match status" value="1"/>
</dbReference>
<dbReference type="FunFam" id="3.40.50.620:FF:000003">
    <property type="entry name" value="Leucine--tRNA ligase"/>
    <property type="match status" value="1"/>
</dbReference>
<dbReference type="FunFam" id="3.40.50.620:FF:000124">
    <property type="entry name" value="Leucine--tRNA ligase"/>
    <property type="match status" value="1"/>
</dbReference>
<dbReference type="FunFam" id="3.90.740.10:FF:000012">
    <property type="entry name" value="Leucine--tRNA ligase"/>
    <property type="match status" value="1"/>
</dbReference>
<dbReference type="Gene3D" id="2.20.28.290">
    <property type="match status" value="1"/>
</dbReference>
<dbReference type="Gene3D" id="3.10.20.590">
    <property type="match status" value="1"/>
</dbReference>
<dbReference type="Gene3D" id="3.40.50.620">
    <property type="entry name" value="HUPs"/>
    <property type="match status" value="2"/>
</dbReference>
<dbReference type="Gene3D" id="1.10.730.10">
    <property type="entry name" value="Isoleucyl-tRNA Synthetase, Domain 1"/>
    <property type="match status" value="1"/>
</dbReference>
<dbReference type="Gene3D" id="3.90.740.10">
    <property type="entry name" value="Valyl/Leucyl/Isoleucyl-tRNA synthetase, editing domain"/>
    <property type="match status" value="1"/>
</dbReference>
<dbReference type="HAMAP" id="MF_00049_B">
    <property type="entry name" value="Leu_tRNA_synth_B"/>
    <property type="match status" value="1"/>
</dbReference>
<dbReference type="InterPro" id="IPR001412">
    <property type="entry name" value="aa-tRNA-synth_I_CS"/>
</dbReference>
<dbReference type="InterPro" id="IPR002300">
    <property type="entry name" value="aa-tRNA-synth_Ia"/>
</dbReference>
<dbReference type="InterPro" id="IPR002302">
    <property type="entry name" value="Leu-tRNA-ligase"/>
</dbReference>
<dbReference type="InterPro" id="IPR025709">
    <property type="entry name" value="Leu_tRNA-synth_edit"/>
</dbReference>
<dbReference type="InterPro" id="IPR013155">
    <property type="entry name" value="M/V/L/I-tRNA-synth_anticd-bd"/>
</dbReference>
<dbReference type="InterPro" id="IPR015413">
    <property type="entry name" value="Methionyl/Leucyl_tRNA_Synth"/>
</dbReference>
<dbReference type="InterPro" id="IPR014729">
    <property type="entry name" value="Rossmann-like_a/b/a_fold"/>
</dbReference>
<dbReference type="InterPro" id="IPR009080">
    <property type="entry name" value="tRNAsynth_Ia_anticodon-bd"/>
</dbReference>
<dbReference type="InterPro" id="IPR009008">
    <property type="entry name" value="Val/Leu/Ile-tRNA-synth_edit"/>
</dbReference>
<dbReference type="NCBIfam" id="TIGR00396">
    <property type="entry name" value="leuS_bact"/>
    <property type="match status" value="1"/>
</dbReference>
<dbReference type="PANTHER" id="PTHR43740:SF2">
    <property type="entry name" value="LEUCINE--TRNA LIGASE, MITOCHONDRIAL"/>
    <property type="match status" value="1"/>
</dbReference>
<dbReference type="PANTHER" id="PTHR43740">
    <property type="entry name" value="LEUCYL-TRNA SYNTHETASE"/>
    <property type="match status" value="1"/>
</dbReference>
<dbReference type="Pfam" id="PF08264">
    <property type="entry name" value="Anticodon_1"/>
    <property type="match status" value="1"/>
</dbReference>
<dbReference type="Pfam" id="PF00133">
    <property type="entry name" value="tRNA-synt_1"/>
    <property type="match status" value="2"/>
</dbReference>
<dbReference type="Pfam" id="PF13603">
    <property type="entry name" value="tRNA-synt_1_2"/>
    <property type="match status" value="1"/>
</dbReference>
<dbReference type="Pfam" id="PF09334">
    <property type="entry name" value="tRNA-synt_1g"/>
    <property type="match status" value="1"/>
</dbReference>
<dbReference type="PRINTS" id="PR00985">
    <property type="entry name" value="TRNASYNTHLEU"/>
</dbReference>
<dbReference type="SUPFAM" id="SSF47323">
    <property type="entry name" value="Anticodon-binding domain of a subclass of class I aminoacyl-tRNA synthetases"/>
    <property type="match status" value="1"/>
</dbReference>
<dbReference type="SUPFAM" id="SSF52374">
    <property type="entry name" value="Nucleotidylyl transferase"/>
    <property type="match status" value="1"/>
</dbReference>
<dbReference type="SUPFAM" id="SSF50677">
    <property type="entry name" value="ValRS/IleRS/LeuRS editing domain"/>
    <property type="match status" value="1"/>
</dbReference>
<dbReference type="PROSITE" id="PS00178">
    <property type="entry name" value="AA_TRNA_LIGASE_I"/>
    <property type="match status" value="1"/>
</dbReference>
<accession>Q1CKQ4</accession>
<accession>C4GR28</accession>
<reference key="1">
    <citation type="journal article" date="2006" name="J. Bacteriol.">
        <title>Complete genome sequence of Yersinia pestis strains Antiqua and Nepal516: evidence of gene reduction in an emerging pathogen.</title>
        <authorList>
            <person name="Chain P.S.G."/>
            <person name="Hu P."/>
            <person name="Malfatti S.A."/>
            <person name="Radnedge L."/>
            <person name="Larimer F."/>
            <person name="Vergez L.M."/>
            <person name="Worsham P."/>
            <person name="Chu M.C."/>
            <person name="Andersen G.L."/>
        </authorList>
    </citation>
    <scope>NUCLEOTIDE SEQUENCE [LARGE SCALE GENOMIC DNA]</scope>
    <source>
        <strain>Nepal516</strain>
    </source>
</reference>
<reference key="2">
    <citation type="submission" date="2009-04" db="EMBL/GenBank/DDBJ databases">
        <title>Yersinia pestis Nepal516A whole genome shotgun sequencing project.</title>
        <authorList>
            <person name="Plunkett G. III"/>
            <person name="Anderson B.D."/>
            <person name="Baumler D.J."/>
            <person name="Burland V."/>
            <person name="Cabot E.L."/>
            <person name="Glasner J.D."/>
            <person name="Mau B."/>
            <person name="Neeno-Eckwall E."/>
            <person name="Perna N.T."/>
            <person name="Munk A.C."/>
            <person name="Tapia R."/>
            <person name="Green L.D."/>
            <person name="Rogers Y.C."/>
            <person name="Detter J.C."/>
            <person name="Bruce D.C."/>
            <person name="Brettin T.S."/>
        </authorList>
    </citation>
    <scope>NUCLEOTIDE SEQUENCE [LARGE SCALE GENOMIC DNA]</scope>
    <source>
        <strain>Nepal516</strain>
    </source>
</reference>
<name>SYL_YERPN</name>
<feature type="chain" id="PRO_1000009469" description="Leucine--tRNA ligase">
    <location>
        <begin position="1"/>
        <end position="860"/>
    </location>
</feature>
<feature type="short sequence motif" description="'HIGH' region">
    <location>
        <begin position="42"/>
        <end position="52"/>
    </location>
</feature>
<feature type="short sequence motif" description="'KMSKS' region">
    <location>
        <begin position="619"/>
        <end position="623"/>
    </location>
</feature>
<feature type="binding site" evidence="1">
    <location>
        <position position="622"/>
    </location>
    <ligand>
        <name>ATP</name>
        <dbReference type="ChEBI" id="CHEBI:30616"/>
    </ligand>
</feature>
<protein>
    <recommendedName>
        <fullName evidence="1">Leucine--tRNA ligase</fullName>
        <ecNumber evidence="1">6.1.1.4</ecNumber>
    </recommendedName>
    <alternativeName>
        <fullName evidence="1">Leucyl-tRNA synthetase</fullName>
        <shortName evidence="1">LeuRS</shortName>
    </alternativeName>
</protein>
<evidence type="ECO:0000255" key="1">
    <source>
        <dbReference type="HAMAP-Rule" id="MF_00049"/>
    </source>
</evidence>